<name>TTC1_HUMAN</name>
<sequence length="292" mass="33526">MGEKSENCGVPEDLLNGLKVTDTQEAECAGPPVPDPKNQHSQSKLLRDDEAHLQEDQGEEECFHDCSASFEEEPGADKVENKSNEDVNSSELDEEYLIELEKNMSDEEKQKRREESTRLKEEGNEQFKKGDYIEAESSYSRALEMCPSCFQKERSILFSNRAAARMKQDKKEMAINDCSKAIQLNPSYIRAILRRAELYEKTDKLDEALEDYKSILEKDPSIHQAREACMRLPKQIEERNERLKEEMLGKLKDLGNLVLRPFGLSTENFQIKQDSSTGSYSINFVQNPNNNR</sequence>
<protein>
    <recommendedName>
        <fullName>Tetratricopeptide repeat protein 1</fullName>
        <shortName>TPR repeat protein 1</shortName>
    </recommendedName>
</protein>
<comment type="subunit">
    <text evidence="2 4">Interacts with the GAP domain of NF1 (PubMed:8836031). Interacts (via TPR repeats) with HSP90AA1 and HSPA8 (PubMed:15708368).</text>
</comment>
<comment type="interaction">
    <interactant intactId="EBI-742074">
        <id>Q99614</id>
    </interactant>
    <interactant intactId="EBI-953870">
        <id>Q9UHQ9</id>
        <label>CYB5R1</label>
    </interactant>
    <organismsDiffer>false</organismsDiffer>
    <experiments>3</experiments>
</comment>
<comment type="interaction">
    <interactant intactId="EBI-742074">
        <id>Q99614</id>
    </interactant>
    <interactant intactId="EBI-747754">
        <id>P28799</id>
        <label>GRN</label>
    </interactant>
    <organismsDiffer>false</organismsDiffer>
    <experiments>3</experiments>
</comment>
<comment type="interaction">
    <interactant intactId="EBI-742074">
        <id>Q99614</id>
    </interactant>
    <interactant intactId="EBI-352682">
        <id>P04792</id>
        <label>HSPB1</label>
    </interactant>
    <organismsDiffer>false</organismsDiffer>
    <experiments>3</experiments>
</comment>
<comment type="interaction">
    <interactant intactId="EBI-742074">
        <id>Q99614</id>
    </interactant>
    <interactant intactId="EBI-466029">
        <id>P42858</id>
        <label>HTT</label>
    </interactant>
    <organismsDiffer>false</organismsDiffer>
    <experiments>9</experiments>
</comment>
<comment type="interaction">
    <interactant intactId="EBI-742074">
        <id>Q99614</id>
    </interactant>
    <interactant intactId="EBI-16430249">
        <id>A0A0S2Z528</id>
        <label>PSTPIP1</label>
    </interactant>
    <organismsDiffer>false</organismsDiffer>
    <experiments>3</experiments>
</comment>
<comment type="interaction">
    <interactant intactId="EBI-742074">
        <id>Q99614</id>
    </interactant>
    <interactant intactId="EBI-2130266">
        <id>Q9H4P4</id>
        <label>RNF41</label>
    </interactant>
    <organismsDiffer>false</organismsDiffer>
    <experiments>12</experiments>
</comment>
<comment type="interaction">
    <interactant intactId="EBI-742074">
        <id>Q99614</id>
    </interactant>
    <interactant intactId="EBI-720609">
        <id>O76024</id>
        <label>WFS1</label>
    </interactant>
    <organismsDiffer>false</organismsDiffer>
    <experiments>3</experiments>
</comment>
<proteinExistence type="evidence at protein level"/>
<feature type="chain" id="PRO_0000106376" description="Tetratricopeptide repeat protein 1">
    <location>
        <begin position="1"/>
        <end position="292"/>
    </location>
</feature>
<feature type="repeat" description="TPR 1">
    <location>
        <begin position="116"/>
        <end position="149"/>
    </location>
</feature>
<feature type="repeat" description="TPR 2">
    <location>
        <begin position="155"/>
        <end position="188"/>
    </location>
</feature>
<feature type="repeat" description="TPR 3">
    <location>
        <begin position="189"/>
        <end position="222"/>
    </location>
</feature>
<feature type="region of interest" description="Disordered" evidence="1">
    <location>
        <begin position="23"/>
        <end position="125"/>
    </location>
</feature>
<feature type="compositionally biased region" description="Basic and acidic residues" evidence="1">
    <location>
        <begin position="45"/>
        <end position="55"/>
    </location>
</feature>
<feature type="compositionally biased region" description="Basic and acidic residues" evidence="1">
    <location>
        <begin position="75"/>
        <end position="85"/>
    </location>
</feature>
<feature type="compositionally biased region" description="Basic and acidic residues" evidence="1">
    <location>
        <begin position="99"/>
        <end position="125"/>
    </location>
</feature>
<feature type="modified residue" description="Phosphoserine" evidence="6 7 8 9">
    <location>
        <position position="83"/>
    </location>
</feature>
<feature type="modified residue" description="Phosphoserine" evidence="6">
    <location>
        <position position="90"/>
    </location>
</feature>
<feature type="sequence variant" id="VAR_081225" description="In dbSNP:rs553283797." evidence="3">
    <original>N</original>
    <variation>S</variation>
    <location>
        <position position="290"/>
    </location>
</feature>
<feature type="sequence conflict" description="In Ref. 4; AAH00942." evidence="5" ref="4">
    <original>E</original>
    <variation>K</variation>
    <location>
        <position position="101"/>
    </location>
</feature>
<evidence type="ECO:0000256" key="1">
    <source>
        <dbReference type="SAM" id="MobiDB-lite"/>
    </source>
</evidence>
<evidence type="ECO:0000269" key="2">
    <source>
    </source>
</evidence>
<evidence type="ECO:0000269" key="3">
    <source>
    </source>
</evidence>
<evidence type="ECO:0000269" key="4">
    <source>
    </source>
</evidence>
<evidence type="ECO:0000305" key="5"/>
<evidence type="ECO:0007744" key="6">
    <source>
    </source>
</evidence>
<evidence type="ECO:0007744" key="7">
    <source>
    </source>
</evidence>
<evidence type="ECO:0007744" key="8">
    <source>
    </source>
</evidence>
<evidence type="ECO:0007744" key="9">
    <source>
    </source>
</evidence>
<reference key="1">
    <citation type="journal article" date="1996" name="DNA Cell Biol.">
        <title>Identification and characterization of two novel tetratricopeptide repeat-containing genes.</title>
        <authorList>
            <person name="Murthy A.E."/>
            <person name="Bernards A."/>
            <person name="Church D."/>
            <person name="Wasmuth J."/>
            <person name="Gusella J.F."/>
        </authorList>
    </citation>
    <scope>NUCLEOTIDE SEQUENCE [MRNA]</scope>
    <scope>INTERACTION WITH NF1</scope>
    <source>
        <tissue>Brain</tissue>
        <tissue>Liver</tissue>
    </source>
</reference>
<reference key="2">
    <citation type="journal article" date="2004" name="Nat. Genet.">
        <title>Complete sequencing and characterization of 21,243 full-length human cDNAs.</title>
        <authorList>
            <person name="Ota T."/>
            <person name="Suzuki Y."/>
            <person name="Nishikawa T."/>
            <person name="Otsuki T."/>
            <person name="Sugiyama T."/>
            <person name="Irie R."/>
            <person name="Wakamatsu A."/>
            <person name="Hayashi K."/>
            <person name="Sato H."/>
            <person name="Nagai K."/>
            <person name="Kimura K."/>
            <person name="Makita H."/>
            <person name="Sekine M."/>
            <person name="Obayashi M."/>
            <person name="Nishi T."/>
            <person name="Shibahara T."/>
            <person name="Tanaka T."/>
            <person name="Ishii S."/>
            <person name="Yamamoto J."/>
            <person name="Saito K."/>
            <person name="Kawai Y."/>
            <person name="Isono Y."/>
            <person name="Nakamura Y."/>
            <person name="Nagahari K."/>
            <person name="Murakami K."/>
            <person name="Yasuda T."/>
            <person name="Iwayanagi T."/>
            <person name="Wagatsuma M."/>
            <person name="Shiratori A."/>
            <person name="Sudo H."/>
            <person name="Hosoiri T."/>
            <person name="Kaku Y."/>
            <person name="Kodaira H."/>
            <person name="Kondo H."/>
            <person name="Sugawara M."/>
            <person name="Takahashi M."/>
            <person name="Kanda K."/>
            <person name="Yokoi T."/>
            <person name="Furuya T."/>
            <person name="Kikkawa E."/>
            <person name="Omura Y."/>
            <person name="Abe K."/>
            <person name="Kamihara K."/>
            <person name="Katsuta N."/>
            <person name="Sato K."/>
            <person name="Tanikawa M."/>
            <person name="Yamazaki M."/>
            <person name="Ninomiya K."/>
            <person name="Ishibashi T."/>
            <person name="Yamashita H."/>
            <person name="Murakawa K."/>
            <person name="Fujimori K."/>
            <person name="Tanai H."/>
            <person name="Kimata M."/>
            <person name="Watanabe M."/>
            <person name="Hiraoka S."/>
            <person name="Chiba Y."/>
            <person name="Ishida S."/>
            <person name="Ono Y."/>
            <person name="Takiguchi S."/>
            <person name="Watanabe S."/>
            <person name="Yosida M."/>
            <person name="Hotuta T."/>
            <person name="Kusano J."/>
            <person name="Kanehori K."/>
            <person name="Takahashi-Fujii A."/>
            <person name="Hara H."/>
            <person name="Tanase T.-O."/>
            <person name="Nomura Y."/>
            <person name="Togiya S."/>
            <person name="Komai F."/>
            <person name="Hara R."/>
            <person name="Takeuchi K."/>
            <person name="Arita M."/>
            <person name="Imose N."/>
            <person name="Musashino K."/>
            <person name="Yuuki H."/>
            <person name="Oshima A."/>
            <person name="Sasaki N."/>
            <person name="Aotsuka S."/>
            <person name="Yoshikawa Y."/>
            <person name="Matsunawa H."/>
            <person name="Ichihara T."/>
            <person name="Shiohata N."/>
            <person name="Sano S."/>
            <person name="Moriya S."/>
            <person name="Momiyama H."/>
            <person name="Satoh N."/>
            <person name="Takami S."/>
            <person name="Terashima Y."/>
            <person name="Suzuki O."/>
            <person name="Nakagawa S."/>
            <person name="Senoh A."/>
            <person name="Mizoguchi H."/>
            <person name="Goto Y."/>
            <person name="Shimizu F."/>
            <person name="Wakebe H."/>
            <person name="Hishigaki H."/>
            <person name="Watanabe T."/>
            <person name="Sugiyama A."/>
            <person name="Takemoto M."/>
            <person name="Kawakami B."/>
            <person name="Yamazaki M."/>
            <person name="Watanabe K."/>
            <person name="Kumagai A."/>
            <person name="Itakura S."/>
            <person name="Fukuzumi Y."/>
            <person name="Fujimori Y."/>
            <person name="Komiyama M."/>
            <person name="Tashiro H."/>
            <person name="Tanigami A."/>
            <person name="Fujiwara T."/>
            <person name="Ono T."/>
            <person name="Yamada K."/>
            <person name="Fujii Y."/>
            <person name="Ozaki K."/>
            <person name="Hirao M."/>
            <person name="Ohmori Y."/>
            <person name="Kawabata A."/>
            <person name="Hikiji T."/>
            <person name="Kobatake N."/>
            <person name="Inagaki H."/>
            <person name="Ikema Y."/>
            <person name="Okamoto S."/>
            <person name="Okitani R."/>
            <person name="Kawakami T."/>
            <person name="Noguchi S."/>
            <person name="Itoh T."/>
            <person name="Shigeta K."/>
            <person name="Senba T."/>
            <person name="Matsumura K."/>
            <person name="Nakajima Y."/>
            <person name="Mizuno T."/>
            <person name="Morinaga M."/>
            <person name="Sasaki M."/>
            <person name="Togashi T."/>
            <person name="Oyama M."/>
            <person name="Hata H."/>
            <person name="Watanabe M."/>
            <person name="Komatsu T."/>
            <person name="Mizushima-Sugano J."/>
            <person name="Satoh T."/>
            <person name="Shirai Y."/>
            <person name="Takahashi Y."/>
            <person name="Nakagawa K."/>
            <person name="Okumura K."/>
            <person name="Nagase T."/>
            <person name="Nomura N."/>
            <person name="Kikuchi H."/>
            <person name="Masuho Y."/>
            <person name="Yamashita R."/>
            <person name="Nakai K."/>
            <person name="Yada T."/>
            <person name="Nakamura Y."/>
            <person name="Ohara O."/>
            <person name="Isogai T."/>
            <person name="Sugano S."/>
        </authorList>
    </citation>
    <scope>NUCLEOTIDE SEQUENCE [LARGE SCALE MRNA]</scope>
</reference>
<reference key="3">
    <citation type="submission" date="2005-09" db="EMBL/GenBank/DDBJ databases">
        <authorList>
            <person name="Mural R.J."/>
            <person name="Istrail S."/>
            <person name="Sutton G.G."/>
            <person name="Florea L."/>
            <person name="Halpern A.L."/>
            <person name="Mobarry C.M."/>
            <person name="Lippert R."/>
            <person name="Walenz B."/>
            <person name="Shatkay H."/>
            <person name="Dew I."/>
            <person name="Miller J.R."/>
            <person name="Flanigan M.J."/>
            <person name="Edwards N.J."/>
            <person name="Bolanos R."/>
            <person name="Fasulo D."/>
            <person name="Halldorsson B.V."/>
            <person name="Hannenhalli S."/>
            <person name="Turner R."/>
            <person name="Yooseph S."/>
            <person name="Lu F."/>
            <person name="Nusskern D.R."/>
            <person name="Shue B.C."/>
            <person name="Zheng X.H."/>
            <person name="Zhong F."/>
            <person name="Delcher A.L."/>
            <person name="Huson D.H."/>
            <person name="Kravitz S.A."/>
            <person name="Mouchard L."/>
            <person name="Reinert K."/>
            <person name="Remington K.A."/>
            <person name="Clark A.G."/>
            <person name="Waterman M.S."/>
            <person name="Eichler E.E."/>
            <person name="Adams M.D."/>
            <person name="Hunkapiller M.W."/>
            <person name="Myers E.W."/>
            <person name="Venter J.C."/>
        </authorList>
    </citation>
    <scope>NUCLEOTIDE SEQUENCE [LARGE SCALE GENOMIC DNA]</scope>
</reference>
<reference key="4">
    <citation type="journal article" date="2004" name="Genome Res.">
        <title>The status, quality, and expansion of the NIH full-length cDNA project: the Mammalian Gene Collection (MGC).</title>
        <authorList>
            <consortium name="The MGC Project Team"/>
        </authorList>
    </citation>
    <scope>NUCLEOTIDE SEQUENCE [LARGE SCALE MRNA]</scope>
    <source>
        <tissue>Placenta</tissue>
    </source>
</reference>
<reference key="5">
    <citation type="journal article" date="2005" name="Arch. Biochem. Biophys.">
        <title>Small glutamine-rich tetratricopeptide repeat-containing protein is composed of three structural units with distinct functions.</title>
        <authorList>
            <person name="Liou S.T."/>
            <person name="Wang C."/>
        </authorList>
    </citation>
    <scope>INTERACTION WITH HSP90AA1 AND HSPA8</scope>
</reference>
<reference key="6">
    <citation type="journal article" date="2008" name="Proc. Natl. Acad. Sci. U.S.A.">
        <title>A quantitative atlas of mitotic phosphorylation.</title>
        <authorList>
            <person name="Dephoure N."/>
            <person name="Zhou C."/>
            <person name="Villen J."/>
            <person name="Beausoleil S.A."/>
            <person name="Bakalarski C.E."/>
            <person name="Elledge S.J."/>
            <person name="Gygi S.P."/>
        </authorList>
    </citation>
    <scope>PHOSPHORYLATION [LARGE SCALE ANALYSIS] AT SER-83 AND SER-90</scope>
    <scope>IDENTIFICATION BY MASS SPECTROMETRY [LARGE SCALE ANALYSIS]</scope>
    <source>
        <tissue>Cervix carcinoma</tissue>
    </source>
</reference>
<reference key="7">
    <citation type="journal article" date="2010" name="Sci. Signal.">
        <title>Quantitative phosphoproteomics reveals widespread full phosphorylation site occupancy during mitosis.</title>
        <authorList>
            <person name="Olsen J.V."/>
            <person name="Vermeulen M."/>
            <person name="Santamaria A."/>
            <person name="Kumar C."/>
            <person name="Miller M.L."/>
            <person name="Jensen L.J."/>
            <person name="Gnad F."/>
            <person name="Cox J."/>
            <person name="Jensen T.S."/>
            <person name="Nigg E.A."/>
            <person name="Brunak S."/>
            <person name="Mann M."/>
        </authorList>
    </citation>
    <scope>PHOSPHORYLATION [LARGE SCALE ANALYSIS] AT SER-83</scope>
    <scope>IDENTIFICATION BY MASS SPECTROMETRY [LARGE SCALE ANALYSIS]</scope>
    <source>
        <tissue>Cervix carcinoma</tissue>
    </source>
</reference>
<reference key="8">
    <citation type="journal article" date="2011" name="BMC Syst. Biol.">
        <title>Initial characterization of the human central proteome.</title>
        <authorList>
            <person name="Burkard T.R."/>
            <person name="Planyavsky M."/>
            <person name="Kaupe I."/>
            <person name="Breitwieser F.P."/>
            <person name="Buerckstuemmer T."/>
            <person name="Bennett K.L."/>
            <person name="Superti-Furga G."/>
            <person name="Colinge J."/>
        </authorList>
    </citation>
    <scope>IDENTIFICATION BY MASS SPECTROMETRY [LARGE SCALE ANALYSIS]</scope>
</reference>
<reference key="9">
    <citation type="journal article" date="2011" name="Sci. Signal.">
        <title>System-wide temporal characterization of the proteome and phosphoproteome of human embryonic stem cell differentiation.</title>
        <authorList>
            <person name="Rigbolt K.T."/>
            <person name="Prokhorova T.A."/>
            <person name="Akimov V."/>
            <person name="Henningsen J."/>
            <person name="Johansen P.T."/>
            <person name="Kratchmarova I."/>
            <person name="Kassem M."/>
            <person name="Mann M."/>
            <person name="Olsen J.V."/>
            <person name="Blagoev B."/>
        </authorList>
    </citation>
    <scope>PHOSPHORYLATION [LARGE SCALE ANALYSIS] AT SER-83</scope>
    <scope>IDENTIFICATION BY MASS SPECTROMETRY [LARGE SCALE ANALYSIS]</scope>
</reference>
<reference key="10">
    <citation type="journal article" date="2013" name="J. Proteome Res.">
        <title>Toward a comprehensive characterization of a human cancer cell phosphoproteome.</title>
        <authorList>
            <person name="Zhou H."/>
            <person name="Di Palma S."/>
            <person name="Preisinger C."/>
            <person name="Peng M."/>
            <person name="Polat A.N."/>
            <person name="Heck A.J."/>
            <person name="Mohammed S."/>
        </authorList>
    </citation>
    <scope>PHOSPHORYLATION [LARGE SCALE ANALYSIS] AT SER-83</scope>
    <scope>IDENTIFICATION BY MASS SPECTROMETRY [LARGE SCALE ANALYSIS]</scope>
    <source>
        <tissue>Erythroleukemia</tissue>
    </source>
</reference>
<reference key="11">
    <citation type="journal article" date="2014" name="J. Proteomics">
        <title>An enzyme assisted RP-RPLC approach for in-depth analysis of human liver phosphoproteome.</title>
        <authorList>
            <person name="Bian Y."/>
            <person name="Song C."/>
            <person name="Cheng K."/>
            <person name="Dong M."/>
            <person name="Wang F."/>
            <person name="Huang J."/>
            <person name="Sun D."/>
            <person name="Wang L."/>
            <person name="Ye M."/>
            <person name="Zou H."/>
        </authorList>
    </citation>
    <scope>IDENTIFICATION BY MASS SPECTROMETRY [LARGE SCALE ANALYSIS]</scope>
    <source>
        <tissue>Liver</tissue>
    </source>
</reference>
<reference evidence="5" key="12">
    <citation type="journal article" date="2018" name="Clin. Genet.">
        <title>A novel nonsense variant in REEP6 is involved in a sporadic rod-cone dystrophy case.</title>
        <authorList>
            <person name="Mejecase C."/>
            <person name="Mohand-Said S."/>
            <person name="El Shamieh S."/>
            <person name="Antonio A."/>
            <person name="Condroyer C."/>
            <person name="Blanchard S."/>
            <person name="Letexier M."/>
            <person name="Saraiva J.P."/>
            <person name="Sahel J.A."/>
            <person name="Audo I."/>
            <person name="Zeitz C."/>
        </authorList>
    </citation>
    <scope>VARIANT SER-290</scope>
</reference>
<dbReference type="EMBL" id="U46570">
    <property type="protein sequence ID" value="AAB36871.1"/>
    <property type="molecule type" value="mRNA"/>
</dbReference>
<dbReference type="EMBL" id="AK315262">
    <property type="protein sequence ID" value="BAG37679.1"/>
    <property type="molecule type" value="mRNA"/>
</dbReference>
<dbReference type="EMBL" id="CH471062">
    <property type="protein sequence ID" value="EAW61570.1"/>
    <property type="molecule type" value="Genomic_DNA"/>
</dbReference>
<dbReference type="EMBL" id="CH471062">
    <property type="protein sequence ID" value="EAW61571.1"/>
    <property type="molecule type" value="Genomic_DNA"/>
</dbReference>
<dbReference type="EMBL" id="BC000942">
    <property type="protein sequence ID" value="AAH00942.1"/>
    <property type="molecule type" value="mRNA"/>
</dbReference>
<dbReference type="CCDS" id="CCDS4348.1"/>
<dbReference type="RefSeq" id="NP_001269429.1">
    <property type="nucleotide sequence ID" value="NM_001282500.2"/>
</dbReference>
<dbReference type="RefSeq" id="NP_003305.1">
    <property type="nucleotide sequence ID" value="NM_003314.3"/>
</dbReference>
<dbReference type="SMR" id="Q99614"/>
<dbReference type="BioGRID" id="113116">
    <property type="interactions" value="192"/>
</dbReference>
<dbReference type="FunCoup" id="Q99614">
    <property type="interactions" value="2247"/>
</dbReference>
<dbReference type="IntAct" id="Q99614">
    <property type="interactions" value="75"/>
</dbReference>
<dbReference type="STRING" id="9606.ENSP00000231238"/>
<dbReference type="GlyCosmos" id="Q99614">
    <property type="glycosylation" value="1 site, 1 glycan"/>
</dbReference>
<dbReference type="GlyGen" id="Q99614">
    <property type="glycosylation" value="2 sites, 1 O-linked glycan (2 sites)"/>
</dbReference>
<dbReference type="iPTMnet" id="Q99614"/>
<dbReference type="MetOSite" id="Q99614"/>
<dbReference type="PhosphoSitePlus" id="Q99614"/>
<dbReference type="BioMuta" id="TTC1"/>
<dbReference type="DMDM" id="12585378"/>
<dbReference type="jPOST" id="Q99614"/>
<dbReference type="MassIVE" id="Q99614"/>
<dbReference type="PaxDb" id="9606-ENSP00000231238"/>
<dbReference type="PeptideAtlas" id="Q99614"/>
<dbReference type="ProteomicsDB" id="78358"/>
<dbReference type="Pumba" id="Q99614"/>
<dbReference type="TopDownProteomics" id="Q99614"/>
<dbReference type="Antibodypedia" id="28512">
    <property type="antibodies" value="174 antibodies from 27 providers"/>
</dbReference>
<dbReference type="DNASU" id="7265"/>
<dbReference type="Ensembl" id="ENST00000231238.10">
    <property type="protein sequence ID" value="ENSP00000231238.4"/>
    <property type="gene ID" value="ENSG00000113312.12"/>
</dbReference>
<dbReference type="Ensembl" id="ENST00000522793.5">
    <property type="protein sequence ID" value="ENSP00000429225.1"/>
    <property type="gene ID" value="ENSG00000113312.12"/>
</dbReference>
<dbReference type="Ensembl" id="ENST00000682719.1">
    <property type="protein sequence ID" value="ENSP00000507891.1"/>
    <property type="gene ID" value="ENSG00000113312.12"/>
</dbReference>
<dbReference type="GeneID" id="7265"/>
<dbReference type="KEGG" id="hsa:7265"/>
<dbReference type="MANE-Select" id="ENST00000231238.10">
    <property type="protein sequence ID" value="ENSP00000231238.4"/>
    <property type="RefSeq nucleotide sequence ID" value="NM_003314.3"/>
    <property type="RefSeq protein sequence ID" value="NP_003305.1"/>
</dbReference>
<dbReference type="UCSC" id="uc003lxu.5">
    <property type="organism name" value="human"/>
</dbReference>
<dbReference type="AGR" id="HGNC:12391"/>
<dbReference type="CTD" id="7265"/>
<dbReference type="DisGeNET" id="7265"/>
<dbReference type="GeneCards" id="TTC1"/>
<dbReference type="HGNC" id="HGNC:12391">
    <property type="gene designation" value="TTC1"/>
</dbReference>
<dbReference type="HPA" id="ENSG00000113312">
    <property type="expression patterns" value="Low tissue specificity"/>
</dbReference>
<dbReference type="MalaCards" id="TTC1"/>
<dbReference type="MIM" id="601963">
    <property type="type" value="gene"/>
</dbReference>
<dbReference type="neXtProt" id="NX_Q99614"/>
<dbReference type="OpenTargets" id="ENSG00000113312"/>
<dbReference type="PharmGKB" id="PA37057"/>
<dbReference type="VEuPathDB" id="HostDB:ENSG00000113312"/>
<dbReference type="eggNOG" id="KOG4234">
    <property type="taxonomic scope" value="Eukaryota"/>
</dbReference>
<dbReference type="GeneTree" id="ENSGT00940000157213"/>
<dbReference type="HOGENOM" id="CLU_058463_3_0_1"/>
<dbReference type="InParanoid" id="Q99614"/>
<dbReference type="OMA" id="KSAIDDC"/>
<dbReference type="OrthoDB" id="1872379at2759"/>
<dbReference type="PAN-GO" id="Q99614">
    <property type="GO annotations" value="0 GO annotations based on evolutionary models"/>
</dbReference>
<dbReference type="PhylomeDB" id="Q99614"/>
<dbReference type="TreeFam" id="TF317515"/>
<dbReference type="PathwayCommons" id="Q99614"/>
<dbReference type="SignaLink" id="Q99614"/>
<dbReference type="BioGRID-ORCS" id="7265">
    <property type="hits" value="737 hits in 1148 CRISPR screens"/>
</dbReference>
<dbReference type="ChiTaRS" id="TTC1">
    <property type="organism name" value="human"/>
</dbReference>
<dbReference type="GeneWiki" id="TTC1"/>
<dbReference type="GenomeRNAi" id="7265"/>
<dbReference type="Pharos" id="Q99614">
    <property type="development level" value="Tbio"/>
</dbReference>
<dbReference type="PRO" id="PR:Q99614"/>
<dbReference type="Proteomes" id="UP000005640">
    <property type="component" value="Chromosome 5"/>
</dbReference>
<dbReference type="RNAct" id="Q99614">
    <property type="molecule type" value="protein"/>
</dbReference>
<dbReference type="Bgee" id="ENSG00000113312">
    <property type="expression patterns" value="Expressed in apex of heart and 203 other cell types or tissues"/>
</dbReference>
<dbReference type="ExpressionAtlas" id="Q99614">
    <property type="expression patterns" value="baseline and differential"/>
</dbReference>
<dbReference type="GO" id="GO:0005829">
    <property type="term" value="C:cytosol"/>
    <property type="evidence" value="ECO:0000314"/>
    <property type="project" value="HPA"/>
</dbReference>
<dbReference type="GO" id="GO:0005778">
    <property type="term" value="C:peroxisomal membrane"/>
    <property type="evidence" value="ECO:0007005"/>
    <property type="project" value="UniProtKB"/>
</dbReference>
<dbReference type="GO" id="GO:0051082">
    <property type="term" value="F:unfolded protein binding"/>
    <property type="evidence" value="ECO:0000303"/>
    <property type="project" value="UniProtKB"/>
</dbReference>
<dbReference type="GO" id="GO:0006457">
    <property type="term" value="P:protein folding"/>
    <property type="evidence" value="ECO:0000303"/>
    <property type="project" value="UniProtKB"/>
</dbReference>
<dbReference type="FunFam" id="1.25.40.10:FF:000367">
    <property type="entry name" value="Tetratricopeptide repeat domain 1"/>
    <property type="match status" value="1"/>
</dbReference>
<dbReference type="Gene3D" id="1.25.40.10">
    <property type="entry name" value="Tetratricopeptide repeat domain"/>
    <property type="match status" value="1"/>
</dbReference>
<dbReference type="InterPro" id="IPR011990">
    <property type="entry name" value="TPR-like_helical_dom_sf"/>
</dbReference>
<dbReference type="InterPro" id="IPR052769">
    <property type="entry name" value="TPR_domain_protein"/>
</dbReference>
<dbReference type="InterPro" id="IPR019734">
    <property type="entry name" value="TPR_rpt"/>
</dbReference>
<dbReference type="PANTHER" id="PTHR46014">
    <property type="entry name" value="TETRATRICOPEPTIDE REPEAT PROTEIN 1"/>
    <property type="match status" value="1"/>
</dbReference>
<dbReference type="PANTHER" id="PTHR46014:SF1">
    <property type="entry name" value="TETRATRICOPEPTIDE REPEAT PROTEIN 1"/>
    <property type="match status" value="1"/>
</dbReference>
<dbReference type="Pfam" id="PF00515">
    <property type="entry name" value="TPR_1"/>
    <property type="match status" value="1"/>
</dbReference>
<dbReference type="Pfam" id="PF13181">
    <property type="entry name" value="TPR_8"/>
    <property type="match status" value="2"/>
</dbReference>
<dbReference type="SMART" id="SM00028">
    <property type="entry name" value="TPR"/>
    <property type="match status" value="3"/>
</dbReference>
<dbReference type="SUPFAM" id="SSF48452">
    <property type="entry name" value="TPR-like"/>
    <property type="match status" value="1"/>
</dbReference>
<dbReference type="PROSITE" id="PS50005">
    <property type="entry name" value="TPR"/>
    <property type="match status" value="3"/>
</dbReference>
<dbReference type="PROSITE" id="PS50293">
    <property type="entry name" value="TPR_REGION"/>
    <property type="match status" value="1"/>
</dbReference>
<organism>
    <name type="scientific">Homo sapiens</name>
    <name type="common">Human</name>
    <dbReference type="NCBI Taxonomy" id="9606"/>
    <lineage>
        <taxon>Eukaryota</taxon>
        <taxon>Metazoa</taxon>
        <taxon>Chordata</taxon>
        <taxon>Craniata</taxon>
        <taxon>Vertebrata</taxon>
        <taxon>Euteleostomi</taxon>
        <taxon>Mammalia</taxon>
        <taxon>Eutheria</taxon>
        <taxon>Euarchontoglires</taxon>
        <taxon>Primates</taxon>
        <taxon>Haplorrhini</taxon>
        <taxon>Catarrhini</taxon>
        <taxon>Hominidae</taxon>
        <taxon>Homo</taxon>
    </lineage>
</organism>
<keyword id="KW-0597">Phosphoprotein</keyword>
<keyword id="KW-1267">Proteomics identification</keyword>
<keyword id="KW-1185">Reference proteome</keyword>
<keyword id="KW-0677">Repeat</keyword>
<keyword id="KW-0802">TPR repeat</keyword>
<accession>Q99614</accession>
<accession>B2RCT2</accession>
<accession>D3DQJ8</accession>
<accession>Q9BVT3</accession>
<gene>
    <name type="primary">TTC1</name>
    <name type="synonym">TPR1</name>
</gene>